<comment type="function">
    <text evidence="1">Responsible for methylating the 5'-cap structure of mRNAs.</text>
</comment>
<comment type="catalytic activity">
    <reaction evidence="2 3">
        <text>a 5'-end (5'-triphosphoguanosine)-ribonucleoside in mRNA + S-adenosyl-L-methionine = a 5'-end (N(7)-methyl 5'-triphosphoguanosine)-ribonucleoside in mRNA + S-adenosyl-L-homocysteine</text>
        <dbReference type="Rhea" id="RHEA:67008"/>
        <dbReference type="Rhea" id="RHEA-COMP:17166"/>
        <dbReference type="Rhea" id="RHEA-COMP:17167"/>
        <dbReference type="ChEBI" id="CHEBI:57856"/>
        <dbReference type="ChEBI" id="CHEBI:59789"/>
        <dbReference type="ChEBI" id="CHEBI:156461"/>
        <dbReference type="ChEBI" id="CHEBI:167617"/>
        <dbReference type="EC" id="2.1.1.56"/>
    </reaction>
</comment>
<comment type="subcellular location">
    <subcellularLocation>
        <location evidence="1">Nucleus</location>
    </subcellularLocation>
</comment>
<comment type="similarity">
    <text evidence="3">Belongs to the class I-like SAM-binding methyltransferase superfamily. mRNA cap 0 methyltransferase family.</text>
</comment>
<protein>
    <recommendedName>
        <fullName>mRNA cap guanine-N(7) methyltransferase</fullName>
        <ecNumber evidence="2">2.1.1.56</ecNumber>
    </recommendedName>
    <alternativeName>
        <fullName>mRNA (guanine-N(7))-methyltransferase</fullName>
    </alternativeName>
    <alternativeName>
        <fullName>mRNA cap methyltransferase</fullName>
    </alternativeName>
</protein>
<dbReference type="EC" id="2.1.1.56" evidence="2"/>
<dbReference type="EMBL" id="AE016819">
    <property type="protein sequence ID" value="AAS53346.1"/>
    <property type="molecule type" value="Genomic_DNA"/>
</dbReference>
<dbReference type="RefSeq" id="NP_985522.1">
    <property type="nucleotide sequence ID" value="NM_210876.1"/>
</dbReference>
<dbReference type="SMR" id="Q754U7"/>
<dbReference type="FunCoup" id="Q754U7">
    <property type="interactions" value="1081"/>
</dbReference>
<dbReference type="STRING" id="284811.Q754U7"/>
<dbReference type="EnsemblFungi" id="AAS53346">
    <property type="protein sequence ID" value="AAS53346"/>
    <property type="gene ID" value="AGOS_AFL026W"/>
</dbReference>
<dbReference type="GeneID" id="4621755"/>
<dbReference type="KEGG" id="ago:AGOS_AFL026W"/>
<dbReference type="eggNOG" id="KOG1975">
    <property type="taxonomic scope" value="Eukaryota"/>
</dbReference>
<dbReference type="HOGENOM" id="CLU_020346_2_0_1"/>
<dbReference type="InParanoid" id="Q754U7"/>
<dbReference type="OMA" id="LITGDCF"/>
<dbReference type="OrthoDB" id="10248867at2759"/>
<dbReference type="Proteomes" id="UP000000591">
    <property type="component" value="Chromosome VI"/>
</dbReference>
<dbReference type="GO" id="GO:0005829">
    <property type="term" value="C:cytosol"/>
    <property type="evidence" value="ECO:0007669"/>
    <property type="project" value="EnsemblFungi"/>
</dbReference>
<dbReference type="GO" id="GO:0005634">
    <property type="term" value="C:nucleus"/>
    <property type="evidence" value="ECO:0000318"/>
    <property type="project" value="GO_Central"/>
</dbReference>
<dbReference type="GO" id="GO:0070693">
    <property type="term" value="C:P-TEFb-cap methyltransferase complex"/>
    <property type="evidence" value="ECO:0007669"/>
    <property type="project" value="EnsemblFungi"/>
</dbReference>
<dbReference type="GO" id="GO:0004482">
    <property type="term" value="F:mRNA 5'-cap (guanine-N7-)-methyltransferase activity"/>
    <property type="evidence" value="ECO:0000318"/>
    <property type="project" value="GO_Central"/>
</dbReference>
<dbReference type="GO" id="GO:0003723">
    <property type="term" value="F:RNA binding"/>
    <property type="evidence" value="ECO:0007669"/>
    <property type="project" value="UniProtKB-KW"/>
</dbReference>
<dbReference type="GO" id="GO:0006370">
    <property type="term" value="P:7-methylguanosine mRNA capping"/>
    <property type="evidence" value="ECO:0000318"/>
    <property type="project" value="GO_Central"/>
</dbReference>
<dbReference type="CDD" id="cd02440">
    <property type="entry name" value="AdoMet_MTases"/>
    <property type="match status" value="1"/>
</dbReference>
<dbReference type="FunFam" id="3.40.50.150:FF:000280">
    <property type="entry name" value="mRNA cap guanine-N7 methyltransferase"/>
    <property type="match status" value="1"/>
</dbReference>
<dbReference type="Gene3D" id="3.40.50.150">
    <property type="entry name" value="Vaccinia Virus protein VP39"/>
    <property type="match status" value="1"/>
</dbReference>
<dbReference type="InterPro" id="IPR004971">
    <property type="entry name" value="mRNA_G-N7_MeTrfase_dom"/>
</dbReference>
<dbReference type="InterPro" id="IPR016899">
    <property type="entry name" value="mRNA_G-N7_MeTrfase_euk"/>
</dbReference>
<dbReference type="InterPro" id="IPR039753">
    <property type="entry name" value="RG7MT1"/>
</dbReference>
<dbReference type="InterPro" id="IPR029063">
    <property type="entry name" value="SAM-dependent_MTases_sf"/>
</dbReference>
<dbReference type="PANTHER" id="PTHR12189:SF2">
    <property type="entry name" value="MRNA CAP GUANINE-N7 METHYLTRANSFERASE"/>
    <property type="match status" value="1"/>
</dbReference>
<dbReference type="PANTHER" id="PTHR12189">
    <property type="entry name" value="MRNA GUANINE-7- METHYLTRANSFERASE"/>
    <property type="match status" value="1"/>
</dbReference>
<dbReference type="Pfam" id="PF03291">
    <property type="entry name" value="mRNA_G-N7_MeTrfase"/>
    <property type="match status" value="1"/>
</dbReference>
<dbReference type="PIRSF" id="PIRSF028762">
    <property type="entry name" value="ABD1"/>
    <property type="match status" value="1"/>
</dbReference>
<dbReference type="SUPFAM" id="SSF53335">
    <property type="entry name" value="S-adenosyl-L-methionine-dependent methyltransferases"/>
    <property type="match status" value="1"/>
</dbReference>
<dbReference type="PROSITE" id="PS51562">
    <property type="entry name" value="RNA_CAP0_MT"/>
    <property type="match status" value="1"/>
</dbReference>
<feature type="chain" id="PRO_0000303900" description="mRNA cap guanine-N(7) methyltransferase">
    <location>
        <begin position="1"/>
        <end position="430"/>
    </location>
</feature>
<feature type="domain" description="mRNA cap 0 methyltransferase" evidence="3">
    <location>
        <begin position="136"/>
        <end position="419"/>
    </location>
</feature>
<feature type="region of interest" description="Disordered" evidence="4">
    <location>
        <begin position="1"/>
        <end position="88"/>
    </location>
</feature>
<feature type="compositionally biased region" description="Basic and acidic residues" evidence="4">
    <location>
        <begin position="15"/>
        <end position="37"/>
    </location>
</feature>
<feature type="binding site" evidence="3">
    <location>
        <begin position="145"/>
        <end position="146"/>
    </location>
    <ligand>
        <name>mRNA</name>
        <dbReference type="ChEBI" id="CHEBI:33699"/>
    </ligand>
    <ligandPart>
        <name>mRNA cap</name>
    </ligandPart>
</feature>
<feature type="binding site" evidence="3">
    <location>
        <position position="149"/>
    </location>
    <ligand>
        <name>S-adenosyl-L-methionine</name>
        <dbReference type="ChEBI" id="CHEBI:59789"/>
    </ligand>
</feature>
<feature type="binding site" evidence="3">
    <location>
        <position position="167"/>
    </location>
    <ligand>
        <name>S-adenosyl-L-methionine</name>
        <dbReference type="ChEBI" id="CHEBI:59789"/>
    </ligand>
</feature>
<feature type="binding site" evidence="3">
    <location>
        <position position="189"/>
    </location>
    <ligand>
        <name>S-adenosyl-L-methionine</name>
        <dbReference type="ChEBI" id="CHEBI:59789"/>
    </ligand>
</feature>
<feature type="binding site" evidence="2">
    <location>
        <position position="218"/>
    </location>
    <ligand>
        <name>S-adenosyl-L-methionine</name>
        <dbReference type="ChEBI" id="CHEBI:59789"/>
    </ligand>
</feature>
<feature type="binding site" evidence="2">
    <location>
        <position position="244"/>
    </location>
    <ligand>
        <name>S-adenosyl-L-methionine</name>
        <dbReference type="ChEBI" id="CHEBI:59789"/>
    </ligand>
</feature>
<feature type="binding site" evidence="2">
    <location>
        <position position="249"/>
    </location>
    <ligand>
        <name>S-adenosyl-L-methionine</name>
        <dbReference type="ChEBI" id="CHEBI:59789"/>
    </ligand>
</feature>
<feature type="site" description="mRNA cap binding" evidence="3">
    <location>
        <position position="170"/>
    </location>
</feature>
<feature type="site" description="mRNA cap binding" evidence="3">
    <location>
        <position position="176"/>
    </location>
</feature>
<feature type="site" description="mRNA cap binding" evidence="3">
    <location>
        <position position="201"/>
    </location>
</feature>
<feature type="site" description="mRNA cap binding" evidence="3">
    <location>
        <position position="248"/>
    </location>
</feature>
<feature type="site" description="mRNA cap binding" evidence="3">
    <location>
        <position position="342"/>
    </location>
</feature>
<feature type="site" description="mRNA cap binding" evidence="3">
    <location>
        <position position="411"/>
    </location>
</feature>
<keyword id="KW-0489">Methyltransferase</keyword>
<keyword id="KW-0506">mRNA capping</keyword>
<keyword id="KW-0507">mRNA processing</keyword>
<keyword id="KW-0539">Nucleus</keyword>
<keyword id="KW-1185">Reference proteome</keyword>
<keyword id="KW-0694">RNA-binding</keyword>
<keyword id="KW-0949">S-adenosyl-L-methionine</keyword>
<keyword id="KW-0808">Transferase</keyword>
<gene>
    <name type="primary">ABD1</name>
    <name type="ordered locus">AFL026W</name>
</gene>
<organism>
    <name type="scientific">Eremothecium gossypii (strain ATCC 10895 / CBS 109.51 / FGSC 9923 / NRRL Y-1056)</name>
    <name type="common">Yeast</name>
    <name type="synonym">Ashbya gossypii</name>
    <dbReference type="NCBI Taxonomy" id="284811"/>
    <lineage>
        <taxon>Eukaryota</taxon>
        <taxon>Fungi</taxon>
        <taxon>Dikarya</taxon>
        <taxon>Ascomycota</taxon>
        <taxon>Saccharomycotina</taxon>
        <taxon>Saccharomycetes</taxon>
        <taxon>Saccharomycetales</taxon>
        <taxon>Saccharomycetaceae</taxon>
        <taxon>Eremothecium</taxon>
    </lineage>
</organism>
<evidence type="ECO:0000250" key="1"/>
<evidence type="ECO:0000250" key="2">
    <source>
        <dbReference type="UniProtKB" id="O43148"/>
    </source>
</evidence>
<evidence type="ECO:0000255" key="3">
    <source>
        <dbReference type="PROSITE-ProRule" id="PRU00895"/>
    </source>
</evidence>
<evidence type="ECO:0000256" key="4">
    <source>
        <dbReference type="SAM" id="MobiDB-lite"/>
    </source>
</evidence>
<name>MCES_EREGS</name>
<reference key="1">
    <citation type="journal article" date="2004" name="Science">
        <title>The Ashbya gossypii genome as a tool for mapping the ancient Saccharomyces cerevisiae genome.</title>
        <authorList>
            <person name="Dietrich F.S."/>
            <person name="Voegeli S."/>
            <person name="Brachat S."/>
            <person name="Lerch A."/>
            <person name="Gates K."/>
            <person name="Steiner S."/>
            <person name="Mohr C."/>
            <person name="Poehlmann R."/>
            <person name="Luedi P."/>
            <person name="Choi S."/>
            <person name="Wing R.A."/>
            <person name="Flavier A."/>
            <person name="Gaffney T.D."/>
            <person name="Philippsen P."/>
        </authorList>
    </citation>
    <scope>NUCLEOTIDE SEQUENCE [LARGE SCALE GENOMIC DNA]</scope>
    <source>
        <strain>ATCC 10895 / CBS 109.51 / FGSC 9923 / NRRL Y-1056</strain>
    </source>
</reference>
<reference key="2">
    <citation type="journal article" date="2013" name="G3 (Bethesda)">
        <title>Genomes of Ashbya fungi isolated from insects reveal four mating-type loci, numerous translocations, lack of transposons, and distinct gene duplications.</title>
        <authorList>
            <person name="Dietrich F.S."/>
            <person name="Voegeli S."/>
            <person name="Kuo S."/>
            <person name="Philippsen P."/>
        </authorList>
    </citation>
    <scope>GENOME REANNOTATION</scope>
    <source>
        <strain>ATCC 10895 / CBS 109.51 / FGSC 9923 / NRRL Y-1056</strain>
    </source>
</reference>
<proteinExistence type="inferred from homology"/>
<accession>Q754U7</accession>
<sequence>MALRPEKPVWMSQEQYDRQYGKLEEPKPPREESKPGDQAKPSAEPKSGSEEKTEGSSSSTGQGEERPHFKIQKRRHQNYDLEERKKKQQLNKLREEQLKQHDIEMAANKVVNVDQIVREHYNERTFHAKRYNRNYSPIIKLRNFNNAIKYMLIDKYTRPRDVVLELGCGKGGDLRKYGACEISQFIGIDISNESIREAQRRYLNMRDLDYQVILITGDCFGESLGVAVQPFPECRFPCDVVSTQFCLHYAFETEEKARRAILNVSKSLKVGGFFFGTIPDAEFIRYKLNKFSKEVERPSWGNSIYKVVFANNSYQLNDYEFETPYGNMYTYWLEDAIDNVPEYVIPFETLRNLCDEYGMELEMQKPFNKFFVEEIPQWMNKFSPRLREGLQRSDGKYGVEGDEKEAASYFYTVFAFRKVKDYVENAPAHA</sequence>